<evidence type="ECO:0000255" key="1"/>
<evidence type="ECO:0000255" key="2">
    <source>
        <dbReference type="PROSITE-ProRule" id="PRU00260"/>
    </source>
</evidence>
<evidence type="ECO:0000269" key="3">
    <source>
    </source>
</evidence>
<evidence type="ECO:0000305" key="4"/>
<gene>
    <name type="primary">BGAL3</name>
    <name type="ordered locus">At4g36360</name>
    <name type="ORF">C7A10.1000</name>
    <name type="ORF">F23E13.200</name>
</gene>
<protein>
    <recommendedName>
        <fullName>Beta-galactosidase 3</fullName>
        <shortName>Lactase 3</shortName>
        <ecNumber>3.2.1.23</ecNumber>
    </recommendedName>
</protein>
<proteinExistence type="evidence at transcript level"/>
<keyword id="KW-0025">Alternative splicing</keyword>
<keyword id="KW-0052">Apoplast</keyword>
<keyword id="KW-0325">Glycoprotein</keyword>
<keyword id="KW-0326">Glycosidase</keyword>
<keyword id="KW-0378">Hydrolase</keyword>
<keyword id="KW-1185">Reference proteome</keyword>
<keyword id="KW-0964">Secreted</keyword>
<keyword id="KW-0732">Signal</keyword>
<reference key="1">
    <citation type="submission" date="1999-10" db="EMBL/GenBank/DDBJ databases">
        <title>The beta-galactosidases are encoding by a multigene family in Arabidopsis thaliana.</title>
        <authorList>
            <person name="Gy I."/>
            <person name="Kreis M."/>
            <person name="Lecharny A."/>
        </authorList>
    </citation>
    <scope>NUCLEOTIDE SEQUENCE [MRNA] (ISOFORM 1)</scope>
</reference>
<reference key="2">
    <citation type="journal article" date="1998" name="Nature">
        <title>Analysis of 1.9 Mb of contiguous sequence from chromosome 4 of Arabidopsis thaliana.</title>
        <authorList>
            <person name="Bevan M."/>
            <person name="Bancroft I."/>
            <person name="Bent E."/>
            <person name="Love K."/>
            <person name="Goodman H.M."/>
            <person name="Dean C."/>
            <person name="Bergkamp R."/>
            <person name="Dirkse W."/>
            <person name="van Staveren M."/>
            <person name="Stiekema W."/>
            <person name="Drost L."/>
            <person name="Ridley P."/>
            <person name="Hudson S.-A."/>
            <person name="Patel K."/>
            <person name="Murphy G."/>
            <person name="Piffanelli P."/>
            <person name="Wedler H."/>
            <person name="Wedler E."/>
            <person name="Wambutt R."/>
            <person name="Weitzenegger T."/>
            <person name="Pohl T."/>
            <person name="Terryn N."/>
            <person name="Gielen J."/>
            <person name="Villarroel R."/>
            <person name="De Clercq R."/>
            <person name="van Montagu M."/>
            <person name="Lecharny A."/>
            <person name="Aubourg S."/>
            <person name="Gy I."/>
            <person name="Kreis M."/>
            <person name="Lao N."/>
            <person name="Kavanagh T."/>
            <person name="Hempel S."/>
            <person name="Kotter P."/>
            <person name="Entian K.-D."/>
            <person name="Rieger M."/>
            <person name="Schaefer M."/>
            <person name="Funk B."/>
            <person name="Mueller-Auer S."/>
            <person name="Silvey M."/>
            <person name="James R."/>
            <person name="Monfort A."/>
            <person name="Pons A."/>
            <person name="Puigdomenech P."/>
            <person name="Douka A."/>
            <person name="Voukelatou E."/>
            <person name="Milioni D."/>
            <person name="Hatzopoulos P."/>
            <person name="Piravandi E."/>
            <person name="Obermaier B."/>
            <person name="Hilbert H."/>
            <person name="Duesterhoeft A."/>
            <person name="Moores T."/>
            <person name="Jones J.D.G."/>
            <person name="Eneva T."/>
            <person name="Palme K."/>
            <person name="Benes V."/>
            <person name="Rechmann S."/>
            <person name="Ansorge W."/>
            <person name="Cooke R."/>
            <person name="Berger C."/>
            <person name="Delseny M."/>
            <person name="Voet M."/>
            <person name="Volckaert G."/>
            <person name="Mewes H.-W."/>
            <person name="Klosterman S."/>
            <person name="Schueller C."/>
            <person name="Chalwatzis N."/>
        </authorList>
    </citation>
    <scope>NUCLEOTIDE SEQUENCE [LARGE SCALE GENOMIC DNA]</scope>
    <source>
        <strain>cv. Columbia</strain>
    </source>
</reference>
<reference key="3">
    <citation type="journal article" date="1999" name="Nature">
        <title>Sequence and analysis of chromosome 4 of the plant Arabidopsis thaliana.</title>
        <authorList>
            <person name="Mayer K.F.X."/>
            <person name="Schueller C."/>
            <person name="Wambutt R."/>
            <person name="Murphy G."/>
            <person name="Volckaert G."/>
            <person name="Pohl T."/>
            <person name="Duesterhoeft A."/>
            <person name="Stiekema W."/>
            <person name="Entian K.-D."/>
            <person name="Terryn N."/>
            <person name="Harris B."/>
            <person name="Ansorge W."/>
            <person name="Brandt P."/>
            <person name="Grivell L.A."/>
            <person name="Rieger M."/>
            <person name="Weichselgartner M."/>
            <person name="de Simone V."/>
            <person name="Obermaier B."/>
            <person name="Mache R."/>
            <person name="Mueller M."/>
            <person name="Kreis M."/>
            <person name="Delseny M."/>
            <person name="Puigdomenech P."/>
            <person name="Watson M."/>
            <person name="Schmidtheini T."/>
            <person name="Reichert B."/>
            <person name="Portetelle D."/>
            <person name="Perez-Alonso M."/>
            <person name="Boutry M."/>
            <person name="Bancroft I."/>
            <person name="Vos P."/>
            <person name="Hoheisel J."/>
            <person name="Zimmermann W."/>
            <person name="Wedler H."/>
            <person name="Ridley P."/>
            <person name="Langham S.-A."/>
            <person name="McCullagh B."/>
            <person name="Bilham L."/>
            <person name="Robben J."/>
            <person name="van der Schueren J."/>
            <person name="Grymonprez B."/>
            <person name="Chuang Y.-J."/>
            <person name="Vandenbussche F."/>
            <person name="Braeken M."/>
            <person name="Weltjens I."/>
            <person name="Voet M."/>
            <person name="Bastiaens I."/>
            <person name="Aert R."/>
            <person name="Defoor E."/>
            <person name="Weitzenegger T."/>
            <person name="Bothe G."/>
            <person name="Ramsperger U."/>
            <person name="Hilbert H."/>
            <person name="Braun M."/>
            <person name="Holzer E."/>
            <person name="Brandt A."/>
            <person name="Peters S."/>
            <person name="van Staveren M."/>
            <person name="Dirkse W."/>
            <person name="Mooijman P."/>
            <person name="Klein Lankhorst R."/>
            <person name="Rose M."/>
            <person name="Hauf J."/>
            <person name="Koetter P."/>
            <person name="Berneiser S."/>
            <person name="Hempel S."/>
            <person name="Feldpausch M."/>
            <person name="Lamberth S."/>
            <person name="Van den Daele H."/>
            <person name="De Keyser A."/>
            <person name="Buysshaert C."/>
            <person name="Gielen J."/>
            <person name="Villarroel R."/>
            <person name="De Clercq R."/>
            <person name="van Montagu M."/>
            <person name="Rogers J."/>
            <person name="Cronin A."/>
            <person name="Quail M.A."/>
            <person name="Bray-Allen S."/>
            <person name="Clark L."/>
            <person name="Doggett J."/>
            <person name="Hall S."/>
            <person name="Kay M."/>
            <person name="Lennard N."/>
            <person name="McLay K."/>
            <person name="Mayes R."/>
            <person name="Pettett A."/>
            <person name="Rajandream M.A."/>
            <person name="Lyne M."/>
            <person name="Benes V."/>
            <person name="Rechmann S."/>
            <person name="Borkova D."/>
            <person name="Bloecker H."/>
            <person name="Scharfe M."/>
            <person name="Grimm M."/>
            <person name="Loehnert T.-H."/>
            <person name="Dose S."/>
            <person name="de Haan M."/>
            <person name="Maarse A.C."/>
            <person name="Schaefer M."/>
            <person name="Mueller-Auer S."/>
            <person name="Gabel C."/>
            <person name="Fuchs M."/>
            <person name="Fartmann B."/>
            <person name="Granderath K."/>
            <person name="Dauner D."/>
            <person name="Herzl A."/>
            <person name="Neumann S."/>
            <person name="Argiriou A."/>
            <person name="Vitale D."/>
            <person name="Liguori R."/>
            <person name="Piravandi E."/>
            <person name="Massenet O."/>
            <person name="Quigley F."/>
            <person name="Clabauld G."/>
            <person name="Muendlein A."/>
            <person name="Felber R."/>
            <person name="Schnabl S."/>
            <person name="Hiller R."/>
            <person name="Schmidt W."/>
            <person name="Lecharny A."/>
            <person name="Aubourg S."/>
            <person name="Chefdor F."/>
            <person name="Cooke R."/>
            <person name="Berger C."/>
            <person name="Monfort A."/>
            <person name="Casacuberta E."/>
            <person name="Gibbons T."/>
            <person name="Weber N."/>
            <person name="Vandenbol M."/>
            <person name="Bargues M."/>
            <person name="Terol J."/>
            <person name="Torres A."/>
            <person name="Perez-Perez A."/>
            <person name="Purnelle B."/>
            <person name="Bent E."/>
            <person name="Johnson S."/>
            <person name="Tacon D."/>
            <person name="Jesse T."/>
            <person name="Heijnen L."/>
            <person name="Schwarz S."/>
            <person name="Scholler P."/>
            <person name="Heber S."/>
            <person name="Francs P."/>
            <person name="Bielke C."/>
            <person name="Frishman D."/>
            <person name="Haase D."/>
            <person name="Lemcke K."/>
            <person name="Mewes H.-W."/>
            <person name="Stocker S."/>
            <person name="Zaccaria P."/>
            <person name="Bevan M."/>
            <person name="Wilson R.K."/>
            <person name="de la Bastide M."/>
            <person name="Habermann K."/>
            <person name="Parnell L."/>
            <person name="Dedhia N."/>
            <person name="Gnoj L."/>
            <person name="Schutz K."/>
            <person name="Huang E."/>
            <person name="Spiegel L."/>
            <person name="Sekhon M."/>
            <person name="Murray J."/>
            <person name="Sheet P."/>
            <person name="Cordes M."/>
            <person name="Abu-Threideh J."/>
            <person name="Stoneking T."/>
            <person name="Kalicki J."/>
            <person name="Graves T."/>
            <person name="Harmon G."/>
            <person name="Edwards J."/>
            <person name="Latreille P."/>
            <person name="Courtney L."/>
            <person name="Cloud J."/>
            <person name="Abbott A."/>
            <person name="Scott K."/>
            <person name="Johnson D."/>
            <person name="Minx P."/>
            <person name="Bentley D."/>
            <person name="Fulton B."/>
            <person name="Miller N."/>
            <person name="Greco T."/>
            <person name="Kemp K."/>
            <person name="Kramer J."/>
            <person name="Fulton L."/>
            <person name="Mardis E."/>
            <person name="Dante M."/>
            <person name="Pepin K."/>
            <person name="Hillier L.W."/>
            <person name="Nelson J."/>
            <person name="Spieth J."/>
            <person name="Ryan E."/>
            <person name="Andrews S."/>
            <person name="Geisel C."/>
            <person name="Layman D."/>
            <person name="Du H."/>
            <person name="Ali J."/>
            <person name="Berghoff A."/>
            <person name="Jones K."/>
            <person name="Drone K."/>
            <person name="Cotton M."/>
            <person name="Joshu C."/>
            <person name="Antonoiu B."/>
            <person name="Zidanic M."/>
            <person name="Strong C."/>
            <person name="Sun H."/>
            <person name="Lamar B."/>
            <person name="Yordan C."/>
            <person name="Ma P."/>
            <person name="Zhong J."/>
            <person name="Preston R."/>
            <person name="Vil D."/>
            <person name="Shekher M."/>
            <person name="Matero A."/>
            <person name="Shah R."/>
            <person name="Swaby I.K."/>
            <person name="O'Shaughnessy A."/>
            <person name="Rodriguez M."/>
            <person name="Hoffman J."/>
            <person name="Till S."/>
            <person name="Granat S."/>
            <person name="Shohdy N."/>
            <person name="Hasegawa A."/>
            <person name="Hameed A."/>
            <person name="Lodhi M."/>
            <person name="Johnson A."/>
            <person name="Chen E."/>
            <person name="Marra M.A."/>
            <person name="Martienssen R."/>
            <person name="McCombie W.R."/>
        </authorList>
    </citation>
    <scope>NUCLEOTIDE SEQUENCE [LARGE SCALE GENOMIC DNA]</scope>
    <source>
        <strain>cv. Columbia</strain>
    </source>
</reference>
<reference key="4">
    <citation type="journal article" date="2017" name="Plant J.">
        <title>Araport11: a complete reannotation of the Arabidopsis thaliana reference genome.</title>
        <authorList>
            <person name="Cheng C.Y."/>
            <person name="Krishnakumar V."/>
            <person name="Chan A.P."/>
            <person name="Thibaud-Nissen F."/>
            <person name="Schobel S."/>
            <person name="Town C.D."/>
        </authorList>
    </citation>
    <scope>GENOME REANNOTATION</scope>
    <source>
        <strain>cv. Columbia</strain>
    </source>
</reference>
<reference key="5">
    <citation type="journal article" date="2003" name="Science">
        <title>Empirical analysis of transcriptional activity in the Arabidopsis genome.</title>
        <authorList>
            <person name="Yamada K."/>
            <person name="Lim J."/>
            <person name="Dale J.M."/>
            <person name="Chen H."/>
            <person name="Shinn P."/>
            <person name="Palm C.J."/>
            <person name="Southwick A.M."/>
            <person name="Wu H.C."/>
            <person name="Kim C.J."/>
            <person name="Nguyen M."/>
            <person name="Pham P.K."/>
            <person name="Cheuk R.F."/>
            <person name="Karlin-Newmann G."/>
            <person name="Liu S.X."/>
            <person name="Lam B."/>
            <person name="Sakano H."/>
            <person name="Wu T."/>
            <person name="Yu G."/>
            <person name="Miranda M."/>
            <person name="Quach H.L."/>
            <person name="Tripp M."/>
            <person name="Chang C.H."/>
            <person name="Lee J.M."/>
            <person name="Toriumi M.J."/>
            <person name="Chan M.M."/>
            <person name="Tang C.C."/>
            <person name="Onodera C.S."/>
            <person name="Deng J.M."/>
            <person name="Akiyama K."/>
            <person name="Ansari Y."/>
            <person name="Arakawa T."/>
            <person name="Banh J."/>
            <person name="Banno F."/>
            <person name="Bowser L."/>
            <person name="Brooks S.Y."/>
            <person name="Carninci P."/>
            <person name="Chao Q."/>
            <person name="Choy N."/>
            <person name="Enju A."/>
            <person name="Goldsmith A.D."/>
            <person name="Gurjal M."/>
            <person name="Hansen N.F."/>
            <person name="Hayashizaki Y."/>
            <person name="Johnson-Hopson C."/>
            <person name="Hsuan V.W."/>
            <person name="Iida K."/>
            <person name="Karnes M."/>
            <person name="Khan S."/>
            <person name="Koesema E."/>
            <person name="Ishida J."/>
            <person name="Jiang P.X."/>
            <person name="Jones T."/>
            <person name="Kawai J."/>
            <person name="Kamiya A."/>
            <person name="Meyers C."/>
            <person name="Nakajima M."/>
            <person name="Narusaka M."/>
            <person name="Seki M."/>
            <person name="Sakurai T."/>
            <person name="Satou M."/>
            <person name="Tamse R."/>
            <person name="Vaysberg M."/>
            <person name="Wallender E.K."/>
            <person name="Wong C."/>
            <person name="Yamamura Y."/>
            <person name="Yuan S."/>
            <person name="Shinozaki K."/>
            <person name="Davis R.W."/>
            <person name="Theologis A."/>
            <person name="Ecker J.R."/>
        </authorList>
    </citation>
    <scope>NUCLEOTIDE SEQUENCE [LARGE SCALE MRNA] (ISOFORM 1)</scope>
    <source>
        <strain>cv. Columbia</strain>
    </source>
</reference>
<reference key="6">
    <citation type="submission" date="2006-07" db="EMBL/GenBank/DDBJ databases">
        <title>Large-scale analysis of RIKEN Arabidopsis full-length (RAFL) cDNAs.</title>
        <authorList>
            <person name="Totoki Y."/>
            <person name="Seki M."/>
            <person name="Ishida J."/>
            <person name="Nakajima M."/>
            <person name="Enju A."/>
            <person name="Kamiya A."/>
            <person name="Narusaka M."/>
            <person name="Shin-i T."/>
            <person name="Nakagawa M."/>
            <person name="Sakamoto N."/>
            <person name="Oishi K."/>
            <person name="Kohara Y."/>
            <person name="Kobayashi M."/>
            <person name="Toyoda A."/>
            <person name="Sakaki Y."/>
            <person name="Sakurai T."/>
            <person name="Iida K."/>
            <person name="Akiyama K."/>
            <person name="Satou M."/>
            <person name="Toyoda T."/>
            <person name="Konagaya A."/>
            <person name="Carninci P."/>
            <person name="Kawai J."/>
            <person name="Hayashizaki Y."/>
            <person name="Shinozaki K."/>
        </authorList>
    </citation>
    <scope>NUCLEOTIDE SEQUENCE [LARGE SCALE MRNA] OF 279-856 (ISOFORM 1)</scope>
    <source>
        <strain>cv. Columbia</strain>
    </source>
</reference>
<reference key="7">
    <citation type="submission" date="1994-09" db="EMBL/GenBank/DDBJ databases">
        <title>The Arabidopsis thaliana transcribed genome: the GDR cDNA program.</title>
        <authorList>
            <person name="Raynal M."/>
            <person name="Grellet F."/>
            <person name="Laudie M."/>
            <person name="Meyer Y."/>
            <person name="Cooke R."/>
            <person name="Delseny M."/>
        </authorList>
    </citation>
    <scope>NUCLEOTIDE SEQUENCE [LARGE SCALE MRNA] OF 624-740</scope>
    <source>
        <strain>cv. Columbia</strain>
        <tissue>Green siliques</tissue>
    </source>
</reference>
<reference key="8">
    <citation type="journal article" date="2007" name="Phytochemistry">
        <title>Functional genomic analysis of Arabidopsis thaliana glycoside hydrolase family 35.</title>
        <authorList>
            <person name="Ahn Y.O."/>
            <person name="Zheng M."/>
            <person name="Bevan D.R."/>
            <person name="Esen A."/>
            <person name="Shiu S.-H."/>
            <person name="Benson J."/>
            <person name="Peng H.-P."/>
            <person name="Miller J.T."/>
            <person name="Cheng C.-L."/>
            <person name="Poulton J.E."/>
            <person name="Shih M.-C."/>
        </authorList>
    </citation>
    <scope>TISSUE SPECIFICITY</scope>
    <scope>GENE FAMILY</scope>
    <scope>NOMENCLATURE</scope>
</reference>
<comment type="catalytic activity">
    <reaction>
        <text>Hydrolysis of terminal non-reducing beta-D-galactose residues in beta-D-galactosides.</text>
        <dbReference type="EC" id="3.2.1.23"/>
    </reaction>
</comment>
<comment type="subcellular location">
    <subcellularLocation>
        <location evidence="4">Secreted</location>
        <location evidence="4">Extracellular space</location>
        <location evidence="4">Apoplast</location>
    </subcellularLocation>
</comment>
<comment type="alternative products">
    <event type="alternative splicing"/>
    <isoform>
        <id>Q9SCV9-1</id>
        <name>1</name>
        <sequence type="displayed"/>
    </isoform>
    <isoform>
        <id>Q9SCV9-2</id>
        <name>2</name>
        <sequence type="described" ref="VSP_027466"/>
    </isoform>
</comment>
<comment type="tissue specificity">
    <text evidence="3">Ubiquitous.</text>
</comment>
<comment type="miscellaneous">
    <molecule>Isoform 2</molecule>
    <text evidence="4">May be due to a competing acceptor splice site.</text>
</comment>
<comment type="similarity">
    <text evidence="4">Belongs to the glycosyl hydrolase 35 family.</text>
</comment>
<comment type="sequence caution" evidence="4">
    <conflict type="erroneous gene model prediction">
        <sequence resource="EMBL-CDS" id="CAA18137"/>
    </conflict>
</comment>
<comment type="sequence caution" evidence="4">
    <conflict type="erroneous initiation">
        <sequence resource="EMBL-CDS" id="CAB16852"/>
    </conflict>
</comment>
<comment type="sequence caution" evidence="4">
    <conflict type="erroneous initiation">
        <sequence resource="EMBL-CDS" id="CAB80302"/>
    </conflict>
</comment>
<accession>Q9SCV9</accession>
<accession>O23243</accession>
<accession>Q0WLZ5</accession>
<accession>Q42150</accession>
<accession>Q42317</accession>
<dbReference type="EC" id="3.2.1.23"/>
<dbReference type="EMBL" id="AJ270299">
    <property type="protein sequence ID" value="CAB64739.1"/>
    <property type="molecule type" value="mRNA"/>
</dbReference>
<dbReference type="EMBL" id="Z99708">
    <property type="protein sequence ID" value="CAB16852.1"/>
    <property type="status" value="ALT_INIT"/>
    <property type="molecule type" value="Genomic_DNA"/>
</dbReference>
<dbReference type="EMBL" id="AL022141">
    <property type="protein sequence ID" value="CAA18137.1"/>
    <property type="status" value="ALT_SEQ"/>
    <property type="molecule type" value="Genomic_DNA"/>
</dbReference>
<dbReference type="EMBL" id="AL161589">
    <property type="protein sequence ID" value="CAB80302.1"/>
    <property type="status" value="ALT_INIT"/>
    <property type="molecule type" value="Genomic_DNA"/>
</dbReference>
<dbReference type="EMBL" id="CP002687">
    <property type="protein sequence ID" value="AEE86646.1"/>
    <property type="molecule type" value="Genomic_DNA"/>
</dbReference>
<dbReference type="EMBL" id="CP002687">
    <property type="protein sequence ID" value="AEE86647.1"/>
    <property type="molecule type" value="Genomic_DNA"/>
</dbReference>
<dbReference type="EMBL" id="AY056285">
    <property type="protein sequence ID" value="AAL07134.1"/>
    <property type="molecule type" value="mRNA"/>
</dbReference>
<dbReference type="EMBL" id="AY091432">
    <property type="protein sequence ID" value="AAM14371.1"/>
    <property type="molecule type" value="mRNA"/>
</dbReference>
<dbReference type="EMBL" id="AK230040">
    <property type="protein sequence ID" value="BAF01862.1"/>
    <property type="molecule type" value="mRNA"/>
</dbReference>
<dbReference type="EMBL" id="Z37275">
    <property type="protein sequence ID" value="CAA85537.1"/>
    <property type="molecule type" value="mRNA"/>
</dbReference>
<dbReference type="PIR" id="B85429">
    <property type="entry name" value="B85429"/>
</dbReference>
<dbReference type="PIR" id="T04600">
    <property type="entry name" value="T04600"/>
</dbReference>
<dbReference type="RefSeq" id="NP_568001.1">
    <molecule id="Q9SCV9-1"/>
    <property type="nucleotide sequence ID" value="NM_119799.4"/>
</dbReference>
<dbReference type="RefSeq" id="NP_849506.1">
    <molecule id="Q9SCV9-2"/>
    <property type="nucleotide sequence ID" value="NM_179175.2"/>
</dbReference>
<dbReference type="SMR" id="Q9SCV9"/>
<dbReference type="BioGRID" id="15070">
    <property type="interactions" value="1"/>
</dbReference>
<dbReference type="FunCoup" id="Q9SCV9">
    <property type="interactions" value="139"/>
</dbReference>
<dbReference type="IntAct" id="Q9SCV9">
    <property type="interactions" value="1"/>
</dbReference>
<dbReference type="STRING" id="3702.Q9SCV9"/>
<dbReference type="CAZy" id="GH35">
    <property type="family name" value="Glycoside Hydrolase Family 35"/>
</dbReference>
<dbReference type="GlyCosmos" id="Q9SCV9">
    <property type="glycosylation" value="1 site, No reported glycans"/>
</dbReference>
<dbReference type="GlyGen" id="Q9SCV9">
    <property type="glycosylation" value="1 site"/>
</dbReference>
<dbReference type="PaxDb" id="3702-AT4G36360.1"/>
<dbReference type="ProteomicsDB" id="240680">
    <molecule id="Q9SCV9-1"/>
</dbReference>
<dbReference type="EnsemblPlants" id="AT4G36360.1">
    <molecule id="Q9SCV9-1"/>
    <property type="protein sequence ID" value="AT4G36360.1"/>
    <property type="gene ID" value="AT4G36360"/>
</dbReference>
<dbReference type="EnsemblPlants" id="AT4G36360.2">
    <molecule id="Q9SCV9-2"/>
    <property type="protein sequence ID" value="AT4G36360.2"/>
    <property type="gene ID" value="AT4G36360"/>
</dbReference>
<dbReference type="GeneID" id="829788"/>
<dbReference type="Gramene" id="AT4G36360.1">
    <molecule id="Q9SCV9-1"/>
    <property type="protein sequence ID" value="AT4G36360.1"/>
    <property type="gene ID" value="AT4G36360"/>
</dbReference>
<dbReference type="Gramene" id="AT4G36360.2">
    <molecule id="Q9SCV9-2"/>
    <property type="protein sequence ID" value="AT4G36360.2"/>
    <property type="gene ID" value="AT4G36360"/>
</dbReference>
<dbReference type="KEGG" id="ath:AT4G36360"/>
<dbReference type="Araport" id="AT4G36360"/>
<dbReference type="TAIR" id="AT4G36360">
    <property type="gene designation" value="BGAL3"/>
</dbReference>
<dbReference type="eggNOG" id="KOG0496">
    <property type="taxonomic scope" value="Eukaryota"/>
</dbReference>
<dbReference type="HOGENOM" id="CLU_007853_4_0_1"/>
<dbReference type="InParanoid" id="Q9SCV9"/>
<dbReference type="OMA" id="IVFCFAV"/>
<dbReference type="OrthoDB" id="1657402at2759"/>
<dbReference type="PhylomeDB" id="Q9SCV9"/>
<dbReference type="BioCyc" id="ARA:AT4G36360-MONOMER"/>
<dbReference type="PRO" id="PR:Q9SCV9"/>
<dbReference type="Proteomes" id="UP000006548">
    <property type="component" value="Chromosome 4"/>
</dbReference>
<dbReference type="ExpressionAtlas" id="Q9SCV9">
    <property type="expression patterns" value="baseline and differential"/>
</dbReference>
<dbReference type="GO" id="GO:0048046">
    <property type="term" value="C:apoplast"/>
    <property type="evidence" value="ECO:0007669"/>
    <property type="project" value="UniProtKB-SubCell"/>
</dbReference>
<dbReference type="GO" id="GO:0009505">
    <property type="term" value="C:plant-type cell wall"/>
    <property type="evidence" value="ECO:0000314"/>
    <property type="project" value="TAIR"/>
</dbReference>
<dbReference type="GO" id="GO:0005886">
    <property type="term" value="C:plasma membrane"/>
    <property type="evidence" value="ECO:0007005"/>
    <property type="project" value="TAIR"/>
</dbReference>
<dbReference type="GO" id="GO:0004565">
    <property type="term" value="F:beta-galactosidase activity"/>
    <property type="evidence" value="ECO:0000314"/>
    <property type="project" value="TAIR"/>
</dbReference>
<dbReference type="GO" id="GO:0030246">
    <property type="term" value="F:carbohydrate binding"/>
    <property type="evidence" value="ECO:0007669"/>
    <property type="project" value="InterPro"/>
</dbReference>
<dbReference type="GO" id="GO:0005975">
    <property type="term" value="P:carbohydrate metabolic process"/>
    <property type="evidence" value="ECO:0007669"/>
    <property type="project" value="InterPro"/>
</dbReference>
<dbReference type="CDD" id="cd22842">
    <property type="entry name" value="Gal_Rha_Lectin_BGal"/>
    <property type="match status" value="1"/>
</dbReference>
<dbReference type="FunFam" id="2.60.120.260:FF:000061">
    <property type="entry name" value="Beta-galactosidase"/>
    <property type="match status" value="1"/>
</dbReference>
<dbReference type="FunFam" id="2.60.120.260:FF:000076">
    <property type="entry name" value="Beta-galactosidase"/>
    <property type="match status" value="1"/>
</dbReference>
<dbReference type="FunFam" id="2.60.120.260:FF:000142">
    <property type="entry name" value="Beta-galactosidase"/>
    <property type="match status" value="1"/>
</dbReference>
<dbReference type="FunFam" id="2.60.120.740:FF:000002">
    <property type="entry name" value="Beta-galactosidase"/>
    <property type="match status" value="1"/>
</dbReference>
<dbReference type="FunFam" id="3.20.20.80:FF:000021">
    <property type="entry name" value="Beta-galactosidase"/>
    <property type="match status" value="1"/>
</dbReference>
<dbReference type="Gene3D" id="2.60.120.740">
    <property type="match status" value="1"/>
</dbReference>
<dbReference type="Gene3D" id="2.60.120.260">
    <property type="entry name" value="Galactose-binding domain-like"/>
    <property type="match status" value="1"/>
</dbReference>
<dbReference type="Gene3D" id="3.20.20.80">
    <property type="entry name" value="Glycosidases"/>
    <property type="match status" value="1"/>
</dbReference>
<dbReference type="InterPro" id="IPR048913">
    <property type="entry name" value="BetaGal_gal-bd"/>
</dbReference>
<dbReference type="InterPro" id="IPR008979">
    <property type="entry name" value="Galactose-bd-like_sf"/>
</dbReference>
<dbReference type="InterPro" id="IPR041392">
    <property type="entry name" value="GHD"/>
</dbReference>
<dbReference type="InterPro" id="IPR031330">
    <property type="entry name" value="Gly_Hdrlase_35_cat"/>
</dbReference>
<dbReference type="InterPro" id="IPR019801">
    <property type="entry name" value="Glyco_hydro_35_CS"/>
</dbReference>
<dbReference type="InterPro" id="IPR001944">
    <property type="entry name" value="Glycoside_Hdrlase_35"/>
</dbReference>
<dbReference type="InterPro" id="IPR017853">
    <property type="entry name" value="Glycoside_hydrolase_SF"/>
</dbReference>
<dbReference type="InterPro" id="IPR000922">
    <property type="entry name" value="Lectin_gal-bd_dom"/>
</dbReference>
<dbReference type="InterPro" id="IPR043159">
    <property type="entry name" value="Lectin_gal-bd_sf"/>
</dbReference>
<dbReference type="PANTHER" id="PTHR23421">
    <property type="entry name" value="BETA-GALACTOSIDASE RELATED"/>
    <property type="match status" value="1"/>
</dbReference>
<dbReference type="Pfam" id="PF21467">
    <property type="entry name" value="BetaGal_gal-bd"/>
    <property type="match status" value="2"/>
</dbReference>
<dbReference type="Pfam" id="PF17834">
    <property type="entry name" value="GHD"/>
    <property type="match status" value="1"/>
</dbReference>
<dbReference type="Pfam" id="PF01301">
    <property type="entry name" value="Glyco_hydro_35"/>
    <property type="match status" value="1"/>
</dbReference>
<dbReference type="Pfam" id="PF02140">
    <property type="entry name" value="SUEL_Lectin"/>
    <property type="match status" value="1"/>
</dbReference>
<dbReference type="PRINTS" id="PR00742">
    <property type="entry name" value="GLHYDRLASE35"/>
</dbReference>
<dbReference type="SUPFAM" id="SSF51445">
    <property type="entry name" value="(Trans)glycosidases"/>
    <property type="match status" value="1"/>
</dbReference>
<dbReference type="SUPFAM" id="SSF49785">
    <property type="entry name" value="Galactose-binding domain-like"/>
    <property type="match status" value="2"/>
</dbReference>
<dbReference type="PROSITE" id="PS01182">
    <property type="entry name" value="GLYCOSYL_HYDROL_F35"/>
    <property type="match status" value="1"/>
</dbReference>
<dbReference type="PROSITE" id="PS50228">
    <property type="entry name" value="SUEL_LECTIN"/>
    <property type="match status" value="1"/>
</dbReference>
<sequence>MREMGTGDSASRLILWFCLGFLILGVGFVQCGVTYDRKALLINGQRRILFSGSIHYPRSTPDMWEDLIQKAKDGGIDVIETYVFWNLHEPSPGKYDFEGRNDLVRFVKTIHKAGLYAHLRIGPYVCAEWNFGGFPVWLKYVPGISFRTDNEPFKRAMKGFTERIVELMKSENLFESQGGPIILSQIENEYGRQGQLLGAEGHNYMTWAAKMAIATETGVPWVMCKEDDAPDPVINTCNGFYCDSFAPNKPYKPLIWTEAWSGWFTEFGGPMHHRPVQDLAFGVARFIQKGGSFVNYYMYHGGTNFGRTAGGPFVTTSYDYDAPIDEYGLIRQPKYGHLKELHRAIKMCEKALVSADPVVTSIGNKQQAHVYSAESGDCSAFLANYDTESAARVLFNNVHYNLPPWSISILPDCRNAVFNTAKVGVQTSQMEMLPTDTKNFQWESYLEDLSSLDDSSTFTTHGLLEQINVTRDTSDYLWYMTSVDIGDSESFLHGGELPTLIIQSTGHAVHIFVNGQLSGSAFGTRQNRRFTYQGKINLHSGTNRIALLSVAVGLPNVGGHFESWNTGILGPVALHGLSQGKMDLSWQKWTYQVGLKGEAMNLAFPTNTPSIGWMDASLTVQKPQPLTWHKTYFDAPEGNEPLALDMEGMGKGQIWVNGESIGRYWTAFATGDCSHCSYTGTYKPNKCQTGCGQPTQRWYHVPRAWLKPSQNLLVIFEELGGNPSTVSLVKRSVSGVCAEVSEYHPNIKNWQIESYGKGQTFHRPKVHLKCSPGQAIASIKFASFGTPLGTCGSYQQGECHAATSYAILERKCVGKARCAVTISNSNFGKDPCPNVLKRLTVEAVCAPETSVSTWRP</sequence>
<organism>
    <name type="scientific">Arabidopsis thaliana</name>
    <name type="common">Mouse-ear cress</name>
    <dbReference type="NCBI Taxonomy" id="3702"/>
    <lineage>
        <taxon>Eukaryota</taxon>
        <taxon>Viridiplantae</taxon>
        <taxon>Streptophyta</taxon>
        <taxon>Embryophyta</taxon>
        <taxon>Tracheophyta</taxon>
        <taxon>Spermatophyta</taxon>
        <taxon>Magnoliopsida</taxon>
        <taxon>eudicotyledons</taxon>
        <taxon>Gunneridae</taxon>
        <taxon>Pentapetalae</taxon>
        <taxon>rosids</taxon>
        <taxon>malvids</taxon>
        <taxon>Brassicales</taxon>
        <taxon>Brassicaceae</taxon>
        <taxon>Camelineae</taxon>
        <taxon>Arabidopsis</taxon>
    </lineage>
</organism>
<name>BGAL3_ARATH</name>
<feature type="signal peptide" evidence="1">
    <location>
        <begin position="1"/>
        <end position="31"/>
    </location>
</feature>
<feature type="chain" id="PRO_0000293091" description="Beta-galactosidase 3">
    <location>
        <begin position="32"/>
        <end position="856"/>
    </location>
</feature>
<feature type="domain" description="SUEL-type lectin" evidence="2">
    <location>
        <begin position="760"/>
        <end position="846"/>
    </location>
</feature>
<feature type="active site" description="Proton donor" evidence="1">
    <location>
        <position position="189"/>
    </location>
</feature>
<feature type="active site" description="Nucleophile" evidence="1">
    <location>
        <position position="258"/>
    </location>
</feature>
<feature type="glycosylation site" description="N-linked (GlcNAc...) asparagine" evidence="1">
    <location>
        <position position="468"/>
    </location>
</feature>
<feature type="splice variant" id="VSP_027466" description="In isoform 2." evidence="4">
    <location>
        <position position="811"/>
    </location>
</feature>
<feature type="sequence conflict" description="In Ref. 7; CAA85537." evidence="4" ref="7">
    <original>V</original>
    <variation>L</variation>
    <location>
        <position position="656"/>
    </location>
</feature>
<feature type="sequence conflict" description="In Ref. 7; CAA85537." evidence="4" ref="7">
    <original>K</original>
    <variation>L</variation>
    <location>
        <position position="683"/>
    </location>
</feature>